<proteinExistence type="inferred from homology"/>
<keyword id="KW-0143">Chaperone</keyword>
<keyword id="KW-0963">Cytoplasm</keyword>
<keyword id="KW-0996">Nickel insertion</keyword>
<evidence type="ECO:0000255" key="1">
    <source>
        <dbReference type="HAMAP-Rule" id="MF_01384"/>
    </source>
</evidence>
<sequence length="263" mass="29550">MTTYAQDSKLRLKTKIGADGRCVIEDNFFTPPFKLMAPFYPKDDLAEIMLLAVSPGLMKGDAQDMQLNIGQNCKLRITSQSFEKIHNTEDGFAGRDMHIVVGENAFLDFAPFPLIPFENAHFKGNTTISLHSSSQLLYSEIIVAGRVARNELFQFNRLHTKISILQDNKPIYYDNTILDPKTTDMTNMCMFDGYTHYLNLVLINCPLELFGARELIEEAEVDGAVSEIASSHLCLKALAKGSEPLLALREKIARLVTQKIQKD</sequence>
<accession>Q17VS1</accession>
<gene>
    <name evidence="1" type="primary">ureH</name>
    <name type="ordered locus">Hac_1538</name>
</gene>
<dbReference type="EMBL" id="AM260522">
    <property type="protein sequence ID" value="CAK00255.1"/>
    <property type="molecule type" value="Genomic_DNA"/>
</dbReference>
<dbReference type="RefSeq" id="WP_011578341.1">
    <property type="nucleotide sequence ID" value="NC_008229.1"/>
</dbReference>
<dbReference type="SMR" id="Q17VS1"/>
<dbReference type="STRING" id="382638.Hac_1538"/>
<dbReference type="GeneID" id="31758806"/>
<dbReference type="KEGG" id="hac:Hac_1538"/>
<dbReference type="eggNOG" id="COG0829">
    <property type="taxonomic scope" value="Bacteria"/>
</dbReference>
<dbReference type="HOGENOM" id="CLU_056339_6_1_7"/>
<dbReference type="OrthoDB" id="5328682at2"/>
<dbReference type="BioCyc" id="HACI382638:HAC_RS06525-MONOMER"/>
<dbReference type="Proteomes" id="UP000000775">
    <property type="component" value="Chromosome"/>
</dbReference>
<dbReference type="GO" id="GO:0005737">
    <property type="term" value="C:cytoplasm"/>
    <property type="evidence" value="ECO:0007669"/>
    <property type="project" value="UniProtKB-SubCell"/>
</dbReference>
<dbReference type="GO" id="GO:0016151">
    <property type="term" value="F:nickel cation binding"/>
    <property type="evidence" value="ECO:0007669"/>
    <property type="project" value="InterPro"/>
</dbReference>
<dbReference type="HAMAP" id="MF_01384">
    <property type="entry name" value="UreD"/>
    <property type="match status" value="1"/>
</dbReference>
<dbReference type="InterPro" id="IPR002669">
    <property type="entry name" value="UreD"/>
</dbReference>
<dbReference type="PANTHER" id="PTHR33643">
    <property type="entry name" value="UREASE ACCESSORY PROTEIN D"/>
    <property type="match status" value="1"/>
</dbReference>
<dbReference type="PANTHER" id="PTHR33643:SF1">
    <property type="entry name" value="UREASE ACCESSORY PROTEIN D"/>
    <property type="match status" value="1"/>
</dbReference>
<dbReference type="Pfam" id="PF01774">
    <property type="entry name" value="UreD"/>
    <property type="match status" value="1"/>
</dbReference>
<name>UREH_HELAH</name>
<feature type="chain" id="PRO_1000145091" description="Urease accessory protein UreH">
    <location>
        <begin position="1"/>
        <end position="263"/>
    </location>
</feature>
<comment type="function">
    <text evidence="1">Required for maturation of urease via the functional incorporation of the urease nickel metallocenter.</text>
</comment>
<comment type="subunit">
    <text evidence="1">UreH, UreF and UreG form a complex that acts as a GTP-hydrolysis-dependent molecular chaperone, activating the urease apoprotein by helping to assemble the nickel containing metallocenter of UreC. The UreE protein probably delivers the nickel.</text>
</comment>
<comment type="subcellular location">
    <subcellularLocation>
        <location evidence="1">Cytoplasm</location>
    </subcellularLocation>
</comment>
<comment type="similarity">
    <text evidence="1">Belongs to the UreD family.</text>
</comment>
<protein>
    <recommendedName>
        <fullName evidence="1">Urease accessory protein UreH</fullName>
    </recommendedName>
</protein>
<reference key="1">
    <citation type="journal article" date="2006" name="PLoS Genet.">
        <title>Who ate whom? Adaptive Helicobacter genomic changes that accompanied a host jump from early humans to large felines.</title>
        <authorList>
            <person name="Eppinger M."/>
            <person name="Baar C."/>
            <person name="Linz B."/>
            <person name="Raddatz G."/>
            <person name="Lanz C."/>
            <person name="Keller H."/>
            <person name="Morelli G."/>
            <person name="Gressmann H."/>
            <person name="Achtman M."/>
            <person name="Schuster S.C."/>
        </authorList>
    </citation>
    <scope>NUCLEOTIDE SEQUENCE [LARGE SCALE GENOMIC DNA]</scope>
    <source>
        <strain>Sheeba</strain>
    </source>
</reference>
<organism>
    <name type="scientific">Helicobacter acinonychis (strain Sheeba)</name>
    <dbReference type="NCBI Taxonomy" id="382638"/>
    <lineage>
        <taxon>Bacteria</taxon>
        <taxon>Pseudomonadati</taxon>
        <taxon>Campylobacterota</taxon>
        <taxon>Epsilonproteobacteria</taxon>
        <taxon>Campylobacterales</taxon>
        <taxon>Helicobacteraceae</taxon>
        <taxon>Helicobacter</taxon>
    </lineage>
</organism>